<organism>
    <name type="scientific">Pasteurella multocida (strain Pm70)</name>
    <dbReference type="NCBI Taxonomy" id="272843"/>
    <lineage>
        <taxon>Bacteria</taxon>
        <taxon>Pseudomonadati</taxon>
        <taxon>Pseudomonadota</taxon>
        <taxon>Gammaproteobacteria</taxon>
        <taxon>Pasteurellales</taxon>
        <taxon>Pasteurellaceae</taxon>
        <taxon>Pasteurella</taxon>
    </lineage>
</organism>
<name>PRMA_PASMU</name>
<comment type="function">
    <text evidence="1">Methylates ribosomal protein L11.</text>
</comment>
<comment type="catalytic activity">
    <reaction evidence="1">
        <text>L-lysyl-[protein] + 3 S-adenosyl-L-methionine = N(6),N(6),N(6)-trimethyl-L-lysyl-[protein] + 3 S-adenosyl-L-homocysteine + 3 H(+)</text>
        <dbReference type="Rhea" id="RHEA:54192"/>
        <dbReference type="Rhea" id="RHEA-COMP:9752"/>
        <dbReference type="Rhea" id="RHEA-COMP:13826"/>
        <dbReference type="ChEBI" id="CHEBI:15378"/>
        <dbReference type="ChEBI" id="CHEBI:29969"/>
        <dbReference type="ChEBI" id="CHEBI:57856"/>
        <dbReference type="ChEBI" id="CHEBI:59789"/>
        <dbReference type="ChEBI" id="CHEBI:61961"/>
    </reaction>
</comment>
<comment type="subcellular location">
    <subcellularLocation>
        <location evidence="1">Cytoplasm</location>
    </subcellularLocation>
</comment>
<comment type="similarity">
    <text evidence="1">Belongs to the methyltransferase superfamily. PrmA family.</text>
</comment>
<keyword id="KW-0963">Cytoplasm</keyword>
<keyword id="KW-0489">Methyltransferase</keyword>
<keyword id="KW-1185">Reference proteome</keyword>
<keyword id="KW-0949">S-adenosyl-L-methionine</keyword>
<keyword id="KW-0808">Transferase</keyword>
<protein>
    <recommendedName>
        <fullName evidence="1">Ribosomal protein L11 methyltransferase</fullName>
        <shortName evidence="1">L11 Mtase</shortName>
        <ecNumber evidence="1">2.1.1.-</ecNumber>
    </recommendedName>
</protein>
<accession>Q9CLW2</accession>
<evidence type="ECO:0000255" key="1">
    <source>
        <dbReference type="HAMAP-Rule" id="MF_00735"/>
    </source>
</evidence>
<gene>
    <name evidence="1" type="primary">prmA</name>
    <name type="ordered locus">PM1088</name>
</gene>
<reference key="1">
    <citation type="journal article" date="2001" name="Proc. Natl. Acad. Sci. U.S.A.">
        <title>Complete genomic sequence of Pasteurella multocida Pm70.</title>
        <authorList>
            <person name="May B.J."/>
            <person name="Zhang Q."/>
            <person name="Li L.L."/>
            <person name="Paustian M.L."/>
            <person name="Whittam T.S."/>
            <person name="Kapur V."/>
        </authorList>
    </citation>
    <scope>NUCLEOTIDE SEQUENCE [LARGE SCALE GENOMIC DNA]</scope>
    <source>
        <strain>Pm70</strain>
    </source>
</reference>
<feature type="chain" id="PRO_0000192285" description="Ribosomal protein L11 methyltransferase">
    <location>
        <begin position="1"/>
        <end position="293"/>
    </location>
</feature>
<feature type="binding site" evidence="1">
    <location>
        <position position="145"/>
    </location>
    <ligand>
        <name>S-adenosyl-L-methionine</name>
        <dbReference type="ChEBI" id="CHEBI:59789"/>
    </ligand>
</feature>
<feature type="binding site" evidence="1">
    <location>
        <position position="166"/>
    </location>
    <ligand>
        <name>S-adenosyl-L-methionine</name>
        <dbReference type="ChEBI" id="CHEBI:59789"/>
    </ligand>
</feature>
<feature type="binding site" evidence="1">
    <location>
        <position position="188"/>
    </location>
    <ligand>
        <name>S-adenosyl-L-methionine</name>
        <dbReference type="ChEBI" id="CHEBI:59789"/>
    </ligand>
</feature>
<feature type="binding site" evidence="1">
    <location>
        <position position="230"/>
    </location>
    <ligand>
        <name>S-adenosyl-L-methionine</name>
        <dbReference type="ChEBI" id="CHEBI:59789"/>
    </ligand>
</feature>
<proteinExistence type="inferred from homology"/>
<dbReference type="EC" id="2.1.1.-" evidence="1"/>
<dbReference type="EMBL" id="AE004439">
    <property type="protein sequence ID" value="AAK03172.1"/>
    <property type="molecule type" value="Genomic_DNA"/>
</dbReference>
<dbReference type="RefSeq" id="WP_005717441.1">
    <property type="nucleotide sequence ID" value="NC_002663.1"/>
</dbReference>
<dbReference type="SMR" id="Q9CLW2"/>
<dbReference type="STRING" id="272843.PM1088"/>
<dbReference type="EnsemblBacteria" id="AAK03172">
    <property type="protein sequence ID" value="AAK03172"/>
    <property type="gene ID" value="PM1088"/>
</dbReference>
<dbReference type="GeneID" id="77206406"/>
<dbReference type="KEGG" id="pmu:PM1088"/>
<dbReference type="HOGENOM" id="CLU_049382_4_1_6"/>
<dbReference type="OrthoDB" id="9785995at2"/>
<dbReference type="Proteomes" id="UP000000809">
    <property type="component" value="Chromosome"/>
</dbReference>
<dbReference type="GO" id="GO:0005829">
    <property type="term" value="C:cytosol"/>
    <property type="evidence" value="ECO:0007669"/>
    <property type="project" value="TreeGrafter"/>
</dbReference>
<dbReference type="GO" id="GO:0016279">
    <property type="term" value="F:protein-lysine N-methyltransferase activity"/>
    <property type="evidence" value="ECO:0007669"/>
    <property type="project" value="TreeGrafter"/>
</dbReference>
<dbReference type="GO" id="GO:0032259">
    <property type="term" value="P:methylation"/>
    <property type="evidence" value="ECO:0007669"/>
    <property type="project" value="UniProtKB-KW"/>
</dbReference>
<dbReference type="CDD" id="cd02440">
    <property type="entry name" value="AdoMet_MTases"/>
    <property type="match status" value="1"/>
</dbReference>
<dbReference type="Gene3D" id="3.40.50.150">
    <property type="entry name" value="Vaccinia Virus protein VP39"/>
    <property type="match status" value="1"/>
</dbReference>
<dbReference type="HAMAP" id="MF_00735">
    <property type="entry name" value="Methyltr_PrmA"/>
    <property type="match status" value="1"/>
</dbReference>
<dbReference type="InterPro" id="IPR050078">
    <property type="entry name" value="Ribosomal_L11_MeTrfase_PrmA"/>
</dbReference>
<dbReference type="InterPro" id="IPR004498">
    <property type="entry name" value="Ribosomal_PrmA_MeTrfase"/>
</dbReference>
<dbReference type="InterPro" id="IPR029063">
    <property type="entry name" value="SAM-dependent_MTases_sf"/>
</dbReference>
<dbReference type="NCBIfam" id="TIGR00406">
    <property type="entry name" value="prmA"/>
    <property type="match status" value="1"/>
</dbReference>
<dbReference type="PANTHER" id="PTHR43648">
    <property type="entry name" value="ELECTRON TRANSFER FLAVOPROTEIN BETA SUBUNIT LYSINE METHYLTRANSFERASE"/>
    <property type="match status" value="1"/>
</dbReference>
<dbReference type="PANTHER" id="PTHR43648:SF1">
    <property type="entry name" value="ELECTRON TRANSFER FLAVOPROTEIN BETA SUBUNIT LYSINE METHYLTRANSFERASE"/>
    <property type="match status" value="1"/>
</dbReference>
<dbReference type="Pfam" id="PF06325">
    <property type="entry name" value="PrmA"/>
    <property type="match status" value="1"/>
</dbReference>
<dbReference type="PIRSF" id="PIRSF000401">
    <property type="entry name" value="RPL11_MTase"/>
    <property type="match status" value="1"/>
</dbReference>
<dbReference type="SUPFAM" id="SSF53335">
    <property type="entry name" value="S-adenosyl-L-methionine-dependent methyltransferases"/>
    <property type="match status" value="1"/>
</dbReference>
<sequence>MAWIQIRINSTNTQAEQMSDYLAEIGAVSVTFMDSQDTPIFEPLPGETRLWGNTDVVALFDAETDMQQIVDLLKEAQYLVESSVYKIEQIEDKDWEREWMDNFHPMRFGKRLWICPSWREVPDENATNVMLDPGLAFGTGTHPTTALCLEWLDSLDLQDKTVIDFGCGSGILAIAALKLGAKSAVGIDIDPQAILASRNNAEQNGVADRLQLFLSEDKPADLKADVVVANILAGPLKELYPVIRQLVKPNGVLGLSGILATQASSVCDAYAQSFVLEPVEEREEWCRITGKLQ</sequence>